<gene>
    <name evidence="9" type="primary">DOT1L</name>
    <name type="synonym">KIAA1814</name>
    <name type="synonym">KMT4</name>
</gene>
<accession>Q8TEK3</accession>
<accession>O60379</accession>
<accession>Q96JL1</accession>
<comment type="function">
    <text evidence="3 4">Histone methyltransferase. Methylates 'Lys-79' of histone H3. Nucleosomes are preferred as substrate compared to free histones (PubMed:12123582). Binds to DNA (PubMed:12628190).</text>
</comment>
<comment type="catalytic activity">
    <reaction evidence="1 3">
        <text>L-lysyl(79)-[histone H3] + 3 S-adenosyl-L-methionine = N(6),N(6),N(6)-trimethyl-L-lysyl(79)-[histone H3] + 3 S-adenosyl-L-homocysteine + 3 H(+)</text>
        <dbReference type="Rhea" id="RHEA:60328"/>
        <dbReference type="Rhea" id="RHEA-COMP:15549"/>
        <dbReference type="Rhea" id="RHEA-COMP:15552"/>
        <dbReference type="ChEBI" id="CHEBI:15378"/>
        <dbReference type="ChEBI" id="CHEBI:29969"/>
        <dbReference type="ChEBI" id="CHEBI:57856"/>
        <dbReference type="ChEBI" id="CHEBI:59789"/>
        <dbReference type="ChEBI" id="CHEBI:61961"/>
        <dbReference type="EC" id="2.1.1.360"/>
    </reaction>
</comment>
<comment type="subunit">
    <text evidence="4 5">Interacts with MLLT10.</text>
</comment>
<comment type="interaction">
    <interactant intactId="EBI-2619253">
        <id>Q8TEK3</id>
    </interactant>
    <interactant intactId="EBI-1384215">
        <id>Q03111</id>
        <label>MLLT1</label>
    </interactant>
    <organismsDiffer>false</organismsDiffer>
    <experiments>6</experiments>
</comment>
<comment type="interaction">
    <interactant intactId="EBI-2619253">
        <id>Q8TEK3</id>
    </interactant>
    <interactant intactId="EBI-716132">
        <id>P42568</id>
        <label>MLLT3</label>
    </interactant>
    <organismsDiffer>false</organismsDiffer>
    <experiments>6</experiments>
</comment>
<comment type="subcellular location">
    <subcellularLocation>
        <location evidence="5">Nucleus</location>
    </subcellularLocation>
</comment>
<comment type="alternative products">
    <event type="alternative splicing"/>
    <isoform>
        <id>Q8TEK3-2</id>
        <name>1</name>
        <sequence type="displayed"/>
    </isoform>
    <isoform>
        <id>Q8TEK3-1</id>
        <name>2</name>
        <sequence type="described" ref="VSP_059795"/>
    </isoform>
</comment>
<comment type="disease">
    <text evidence="6">Defects in DOTL1 are associated with an autosomal dominant form of global developmental delay and intellectual disability, with or without one or more major congenital anomalies (PubMed:37827158). The patient phenotypes are characterized by central nervous system (CNS) dysfunction, such as mild motor delay and significant speech and language delay, and a range of congenital anomalies, including brain structural anomalies, cardiac defects, varied urogenital features and growth restriction (PubMed:37827158). Variants may cause a gain-of-function effect leading to an increase in cellular H3K79 methylation levels (PubMed:37827158).</text>
</comment>
<comment type="miscellaneous">
    <text>In contrast to other lysine histone methyltransferases, it does not contain a SET domain, suggesting the existence of another mechanism for methylation of lysine residues of histones.</text>
</comment>
<comment type="similarity">
    <text evidence="1">Belongs to the class I-like SAM-binding methyltransferase superfamily. DOT1 family.</text>
</comment>
<comment type="sequence caution" evidence="8">
    <conflict type="erroneous gene model prediction">
        <sequence resource="EMBL-CDS" id="AAC08316"/>
    </conflict>
</comment>
<sequence>MGEKLELRLKSPVGAEPAVYPWPLPVYDKHHDAAHEIIETIRWVCEEIPDLKLAMENYVLIDYDTKSFESMQRLCDKYNRAIDSIHQLWKGTTQPMKLNTRPSTGLLRHILQQVYNHSVTDPEKLNNYEPFSPEVYGETSFDLVAQMIDEIKMTDDDLFVDLGSGVGQVVLQVAAATNCKHHYGVEKADIPAKYAETMDREFRKWMKWYGKKHAEYTLERGDFLSEEWRERIANTSVIFVNNFAFGPEVDHQLKERFANMKEGGRIVSSKPFAPLNFRINSRNLSDIGTIMRVVELSPLKGSVSWTGKPVSYYLHTIDRTILENYFSSLKNPKLREEQEAARRRQQRESKSNAATPTKGPEGKVAGPADAPMDSGAEEEKAGAATVKKPSPSKARKKKLNKKGRKMAGRKRGRPKKMNTANPERKPKKNQTALDALHAQTVSQTAASSPQDAYRSPHSPFYQLPPSVQRHSPNPLLVAPTPPALQKLLESFKIQYLQFLAYTKTPQYKASLQELLGQEKEKNAQLLGAAQQLLSHCQAQKEEIRRLFQQKLDELGVKALTYNDLIQAQKEISAHNQQLREQSEQLEQDNRALRGQSLQLLKARCEELQLDWATLSLEKLLKEKQALKSQISEKQRHCLELQISIVELEKSQRQQELLQLKSCVPPDDALSLHLRGKGALGRELEPDASRLHLELDCTKFSLPHLSSMSPELSMNGQAAGYELCGVLSRPSSKQNTPQYLASPLDQEVVPCTPSHVGRPRLEKLSGLAAPDYTRLSPAKIVLRRHLSQDHTVPGRPAASELHSRAEHTKENGLPYQSPSVPGSMKLSPQDPRPLSPGALQLAGEKSSEKGLRERAYGSSGELITSLPISIPLSTVQPNKLPVSIPLASVVLPSRAERARSTPSPVLQPRDPSSTLEKQIGANAHGAGSRSLALAPAGFSYAGSVAISGALAGSPASLTPGAEPATLDESSSSGSLFATVGSRSSTPQHPLLLAQPRNSLPASPAHQLSSSPRLGGAAQGPLPEASKGDLPSDSGFSDPESEAKRRIVFTITTGAGSAKQSPSSKHSPLTASARGDCVPSHGQDSRRRGRRKRASAGTPSLSAGVSPKRRALPSVAGLFTQPSGSPLNLNSMVSNINQPLEITAISSPETSLKSSPVPYQDHDQPPVLKKERPLSQTNGAHYSPLTSDEEPGSEDEPSSARIERKIATISLESKSPPKTLENGGGLAGRKPAPAGEPVNSSKWKSTFSPISDIGLAKSADSPLQASSALSQNSLFTFRPALEEPSADAKLAAHPRKGFPGSLSGADGLSPGTNPANGCTFGGGLAADLSLHSFSDGASLPHKGPEAAGLSSPLSFPSQRGKEGSDANPFLSKRQLDGLAGLKGEGSRGKEAGEGGLPLCGPTDKTPLLSGKAAKARDREVDLKNGHNLFISAAAVPPGSLLSGPGLAPAASSAGGAASSAQTHRSFLGPFPPGPQFALGPMSLQANLGSVAGSSVLQSLFSSVPAAAGLVHVSSAATRLTNSHAMGSFSGVAGGTVGGN</sequence>
<name>DOT1L_HUMAN</name>
<evidence type="ECO:0000255" key="1">
    <source>
        <dbReference type="PROSITE-ProRule" id="PRU00902"/>
    </source>
</evidence>
<evidence type="ECO:0000256" key="2">
    <source>
        <dbReference type="SAM" id="MobiDB-lite"/>
    </source>
</evidence>
<evidence type="ECO:0000269" key="3">
    <source>
    </source>
</evidence>
<evidence type="ECO:0000269" key="4">
    <source>
    </source>
</evidence>
<evidence type="ECO:0000269" key="5">
    <source>
    </source>
</evidence>
<evidence type="ECO:0000269" key="6">
    <source>
    </source>
</evidence>
<evidence type="ECO:0000269" key="7">
    <source>
    </source>
</evidence>
<evidence type="ECO:0000305" key="8"/>
<evidence type="ECO:0000312" key="9">
    <source>
        <dbReference type="HGNC" id="HGNC:24948"/>
    </source>
</evidence>
<evidence type="ECO:0007744" key="10">
    <source>
    </source>
</evidence>
<evidence type="ECO:0007744" key="11">
    <source>
    </source>
</evidence>
<evidence type="ECO:0007744" key="12">
    <source>
    </source>
</evidence>
<evidence type="ECO:0007744" key="13">
    <source>
    </source>
</evidence>
<evidence type="ECO:0007744" key="14">
    <source>
    </source>
</evidence>
<evidence type="ECO:0007744" key="15">
    <source>
    </source>
</evidence>
<evidence type="ECO:0007829" key="16">
    <source>
        <dbReference type="PDB" id="2MV7"/>
    </source>
</evidence>
<evidence type="ECO:0007829" key="17">
    <source>
        <dbReference type="PDB" id="3QOW"/>
    </source>
</evidence>
<evidence type="ECO:0007829" key="18">
    <source>
        <dbReference type="PDB" id="3UWP"/>
    </source>
</evidence>
<evidence type="ECO:0007829" key="19">
    <source>
        <dbReference type="PDB" id="4EQZ"/>
    </source>
</evidence>
<evidence type="ECO:0007829" key="20">
    <source>
        <dbReference type="PDB" id="4ER7"/>
    </source>
</evidence>
<evidence type="ECO:0007829" key="21">
    <source>
        <dbReference type="PDB" id="5DTM"/>
    </source>
</evidence>
<evidence type="ECO:0007829" key="22">
    <source>
        <dbReference type="PDB" id="5MW4"/>
    </source>
</evidence>
<evidence type="ECO:0007829" key="23">
    <source>
        <dbReference type="PDB" id="6O96"/>
    </source>
</evidence>
<evidence type="ECO:0007829" key="24">
    <source>
        <dbReference type="PDB" id="6TE6"/>
    </source>
</evidence>
<evidence type="ECO:0007829" key="25">
    <source>
        <dbReference type="PDB" id="7EDP"/>
    </source>
</evidence>
<evidence type="ECO:0007829" key="26">
    <source>
        <dbReference type="PDB" id="7XCT"/>
    </source>
</evidence>
<proteinExistence type="evidence at protein level"/>
<protein>
    <recommendedName>
        <fullName evidence="8">Histone-lysine N-methyltransferase, H3 lysine-79 specific</fullName>
        <ecNumber evidence="3">2.1.1.360</ecNumber>
    </recommendedName>
    <alternativeName>
        <fullName>DOT1-like protein</fullName>
    </alternativeName>
    <alternativeName>
        <fullName>Histone H3-K79 methyltransferase</fullName>
        <shortName>H3-K79-HMTase</shortName>
    </alternativeName>
    <alternativeName>
        <fullName>Lysine N-methyltransferase 4</fullName>
    </alternativeName>
</protein>
<dbReference type="EC" id="2.1.1.360" evidence="3"/>
<dbReference type="EMBL" id="AF509504">
    <property type="protein sequence ID" value="AAM88322.1"/>
    <property type="molecule type" value="mRNA"/>
</dbReference>
<dbReference type="EMBL" id="AC004490">
    <property type="protein sequence ID" value="AAC08316.1"/>
    <property type="status" value="ALT_SEQ"/>
    <property type="molecule type" value="Genomic_DNA"/>
</dbReference>
<dbReference type="EMBL" id="AB058717">
    <property type="protein sequence ID" value="BAB47443.1"/>
    <property type="molecule type" value="mRNA"/>
</dbReference>
<dbReference type="EMBL" id="AK074120">
    <property type="protein sequence ID" value="BAB84946.1"/>
    <property type="molecule type" value="mRNA"/>
</dbReference>
<dbReference type="CCDS" id="CCDS42460.1">
    <molecule id="Q8TEK3-2"/>
</dbReference>
<dbReference type="RefSeq" id="NP_115871.1">
    <molecule id="Q8TEK3-2"/>
    <property type="nucleotide sequence ID" value="NM_032482.3"/>
</dbReference>
<dbReference type="PDB" id="1NW3">
    <property type="method" value="X-ray"/>
    <property type="resolution" value="2.50 A"/>
    <property type="chains" value="A=1-416"/>
</dbReference>
<dbReference type="PDB" id="2MV7">
    <property type="method" value="NMR"/>
    <property type="chains" value="B=877-900"/>
</dbReference>
<dbReference type="PDB" id="3QOW">
    <property type="method" value="X-ray"/>
    <property type="resolution" value="2.10 A"/>
    <property type="chains" value="A=1-416"/>
</dbReference>
<dbReference type="PDB" id="3QOX">
    <property type="method" value="X-ray"/>
    <property type="resolution" value="2.30 A"/>
    <property type="chains" value="A=1-416"/>
</dbReference>
<dbReference type="PDB" id="3SR4">
    <property type="method" value="X-ray"/>
    <property type="resolution" value="2.50 A"/>
    <property type="chains" value="A=1-351"/>
</dbReference>
<dbReference type="PDB" id="3SX0">
    <property type="method" value="X-ray"/>
    <property type="resolution" value="2.28 A"/>
    <property type="chains" value="A=1-420"/>
</dbReference>
<dbReference type="PDB" id="3UWP">
    <property type="method" value="X-ray"/>
    <property type="resolution" value="2.05 A"/>
    <property type="chains" value="A=1-420"/>
</dbReference>
<dbReference type="PDB" id="4EK9">
    <property type="method" value="X-ray"/>
    <property type="resolution" value="2.50 A"/>
    <property type="chains" value="A=1-416"/>
</dbReference>
<dbReference type="PDB" id="4EKG">
    <property type="method" value="X-ray"/>
    <property type="resolution" value="2.80 A"/>
    <property type="chains" value="A=1-416"/>
</dbReference>
<dbReference type="PDB" id="4EKI">
    <property type="method" value="X-ray"/>
    <property type="resolution" value="2.85 A"/>
    <property type="chains" value="A=1-416"/>
</dbReference>
<dbReference type="PDB" id="4EQZ">
    <property type="method" value="X-ray"/>
    <property type="resolution" value="2.15 A"/>
    <property type="chains" value="A=1-420"/>
</dbReference>
<dbReference type="PDB" id="4ER0">
    <property type="method" value="X-ray"/>
    <property type="resolution" value="2.50 A"/>
    <property type="chains" value="A=1-420"/>
</dbReference>
<dbReference type="PDB" id="4ER3">
    <property type="method" value="X-ray"/>
    <property type="resolution" value="2.40 A"/>
    <property type="chains" value="A=1-351"/>
</dbReference>
<dbReference type="PDB" id="4ER5">
    <property type="method" value="X-ray"/>
    <property type="resolution" value="2.57 A"/>
    <property type="chains" value="A=1-412"/>
</dbReference>
<dbReference type="PDB" id="4ER6">
    <property type="method" value="X-ray"/>
    <property type="resolution" value="2.30 A"/>
    <property type="chains" value="A=1-412"/>
</dbReference>
<dbReference type="PDB" id="4ER7">
    <property type="method" value="X-ray"/>
    <property type="resolution" value="2.20 A"/>
    <property type="chains" value="A=1-420"/>
</dbReference>
<dbReference type="PDB" id="4HRA">
    <property type="method" value="X-ray"/>
    <property type="resolution" value="3.15 A"/>
    <property type="chains" value="A=1-416"/>
</dbReference>
<dbReference type="PDB" id="4WVL">
    <property type="method" value="X-ray"/>
    <property type="resolution" value="2.41 A"/>
    <property type="chains" value="A=1-347"/>
</dbReference>
<dbReference type="PDB" id="5DRT">
    <property type="method" value="X-ray"/>
    <property type="resolution" value="2.69 A"/>
    <property type="chains" value="A/B=2-333"/>
</dbReference>
<dbReference type="PDB" id="5DRY">
    <property type="method" value="X-ray"/>
    <property type="resolution" value="2.41 A"/>
    <property type="chains" value="A/B=2-333"/>
</dbReference>
<dbReference type="PDB" id="5DSX">
    <property type="method" value="X-ray"/>
    <property type="resolution" value="2.41 A"/>
    <property type="chains" value="A/B=2-332"/>
</dbReference>
<dbReference type="PDB" id="5DT2">
    <property type="method" value="X-ray"/>
    <property type="resolution" value="2.30 A"/>
    <property type="chains" value="A/B=2-332"/>
</dbReference>
<dbReference type="PDB" id="5DTM">
    <property type="method" value="X-ray"/>
    <property type="resolution" value="2.20 A"/>
    <property type="chains" value="A/B=2-332"/>
</dbReference>
<dbReference type="PDB" id="5DTQ">
    <property type="method" value="X-ray"/>
    <property type="resolution" value="2.61 A"/>
    <property type="chains" value="A/B=2-332"/>
</dbReference>
<dbReference type="PDB" id="5DTR">
    <property type="method" value="X-ray"/>
    <property type="resolution" value="2.34 A"/>
    <property type="chains" value="A/B=2-332"/>
</dbReference>
<dbReference type="PDB" id="5JUW">
    <property type="method" value="X-ray"/>
    <property type="resolution" value="2.28 A"/>
    <property type="chains" value="A=1-420"/>
</dbReference>
<dbReference type="PDB" id="5MVS">
    <property type="method" value="X-ray"/>
    <property type="resolution" value="2.18 A"/>
    <property type="chains" value="A/B=2-332"/>
</dbReference>
<dbReference type="PDB" id="5MW3">
    <property type="method" value="X-ray"/>
    <property type="resolution" value="2.09 A"/>
    <property type="chains" value="A/B=2-332"/>
</dbReference>
<dbReference type="PDB" id="5MW4">
    <property type="method" value="X-ray"/>
    <property type="resolution" value="2.19 A"/>
    <property type="chains" value="A/B=2-332"/>
</dbReference>
<dbReference type="PDB" id="6IN3">
    <property type="method" value="X-ray"/>
    <property type="resolution" value="2.30 A"/>
    <property type="chains" value="A=4-330"/>
</dbReference>
<dbReference type="PDB" id="6J99">
    <property type="method" value="EM"/>
    <property type="resolution" value="4.10 A"/>
    <property type="chains" value="K=1-416"/>
</dbReference>
<dbReference type="PDB" id="6JM9">
    <property type="method" value="EM"/>
    <property type="resolution" value="7.30 A"/>
    <property type="chains" value="X=5-332"/>
</dbReference>
<dbReference type="PDB" id="6JMA">
    <property type="method" value="EM"/>
    <property type="resolution" value="6.80 A"/>
    <property type="chains" value="X=5-332"/>
</dbReference>
<dbReference type="PDB" id="6JN2">
    <property type="method" value="X-ray"/>
    <property type="resolution" value="3.60 A"/>
    <property type="chains" value="B=470-550"/>
</dbReference>
<dbReference type="PDB" id="6NJ9">
    <property type="method" value="EM"/>
    <property type="resolution" value="2.96 A"/>
    <property type="chains" value="K=2-416"/>
</dbReference>
<dbReference type="PDB" id="6NN6">
    <property type="method" value="EM"/>
    <property type="resolution" value="3.90 A"/>
    <property type="chains" value="K=3-416"/>
</dbReference>
<dbReference type="PDB" id="6NOG">
    <property type="method" value="EM"/>
    <property type="resolution" value="3.90 A"/>
    <property type="chains" value="K=2-416"/>
</dbReference>
<dbReference type="PDB" id="6NQA">
    <property type="method" value="EM"/>
    <property type="resolution" value="3.54 A"/>
    <property type="chains" value="K=2-416"/>
</dbReference>
<dbReference type="PDB" id="6O96">
    <property type="method" value="EM"/>
    <property type="resolution" value="3.50 A"/>
    <property type="chains" value="K=2-332"/>
</dbReference>
<dbReference type="PDB" id="6TE6">
    <property type="method" value="X-ray"/>
    <property type="resolution" value="1.98 A"/>
    <property type="chains" value="A/B=2-332"/>
</dbReference>
<dbReference type="PDB" id="6TEL">
    <property type="method" value="X-ray"/>
    <property type="resolution" value="2.19 A"/>
    <property type="chains" value="A/B=2-332"/>
</dbReference>
<dbReference type="PDB" id="6TEN">
    <property type="method" value="X-ray"/>
    <property type="resolution" value="2.21 A"/>
    <property type="chains" value="A/B=2-332"/>
</dbReference>
<dbReference type="PDB" id="7BWD">
    <property type="method" value="EM"/>
    <property type="resolution" value="4.32 A"/>
    <property type="chains" value="K=1-416"/>
</dbReference>
<dbReference type="PDB" id="7EDP">
    <property type="method" value="X-ray"/>
    <property type="resolution" value="2.20 A"/>
    <property type="chains" value="B=610-649"/>
</dbReference>
<dbReference type="PDB" id="7S7E">
    <property type="method" value="X-ray"/>
    <property type="resolution" value="2.04 A"/>
    <property type="chains" value="C=998-1006"/>
</dbReference>
<dbReference type="PDB" id="7S7F">
    <property type="method" value="X-ray"/>
    <property type="resolution" value="1.88 A"/>
    <property type="chains" value="C=998-1006"/>
</dbReference>
<dbReference type="PDB" id="7XCR">
    <property type="method" value="EM"/>
    <property type="resolution" value="2.57 A"/>
    <property type="chains" value="K=5-332"/>
</dbReference>
<dbReference type="PDB" id="7XCT">
    <property type="method" value="EM"/>
    <property type="resolution" value="2.72 A"/>
    <property type="chains" value="K/M=5-332"/>
</dbReference>
<dbReference type="PDBsum" id="1NW3"/>
<dbReference type="PDBsum" id="2MV7"/>
<dbReference type="PDBsum" id="3QOW"/>
<dbReference type="PDBsum" id="3QOX"/>
<dbReference type="PDBsum" id="3SR4"/>
<dbReference type="PDBsum" id="3SX0"/>
<dbReference type="PDBsum" id="3UWP"/>
<dbReference type="PDBsum" id="4EK9"/>
<dbReference type="PDBsum" id="4EKG"/>
<dbReference type="PDBsum" id="4EKI"/>
<dbReference type="PDBsum" id="4EQZ"/>
<dbReference type="PDBsum" id="4ER0"/>
<dbReference type="PDBsum" id="4ER3"/>
<dbReference type="PDBsum" id="4ER5"/>
<dbReference type="PDBsum" id="4ER6"/>
<dbReference type="PDBsum" id="4ER7"/>
<dbReference type="PDBsum" id="4HRA"/>
<dbReference type="PDBsum" id="4WVL"/>
<dbReference type="PDBsum" id="5DRT"/>
<dbReference type="PDBsum" id="5DRY"/>
<dbReference type="PDBsum" id="5DSX"/>
<dbReference type="PDBsum" id="5DT2"/>
<dbReference type="PDBsum" id="5DTM"/>
<dbReference type="PDBsum" id="5DTQ"/>
<dbReference type="PDBsum" id="5DTR"/>
<dbReference type="PDBsum" id="5JUW"/>
<dbReference type="PDBsum" id="5MVS"/>
<dbReference type="PDBsum" id="5MW3"/>
<dbReference type="PDBsum" id="5MW4"/>
<dbReference type="PDBsum" id="6IN3"/>
<dbReference type="PDBsum" id="6J99"/>
<dbReference type="PDBsum" id="6JM9"/>
<dbReference type="PDBsum" id="6JMA"/>
<dbReference type="PDBsum" id="6JN2"/>
<dbReference type="PDBsum" id="6NJ9"/>
<dbReference type="PDBsum" id="6NN6"/>
<dbReference type="PDBsum" id="6NOG"/>
<dbReference type="PDBsum" id="6NQA"/>
<dbReference type="PDBsum" id="6O96"/>
<dbReference type="PDBsum" id="6TE6"/>
<dbReference type="PDBsum" id="6TEL"/>
<dbReference type="PDBsum" id="6TEN"/>
<dbReference type="PDBsum" id="7BWD"/>
<dbReference type="PDBsum" id="7EDP"/>
<dbReference type="PDBsum" id="7S7E"/>
<dbReference type="PDBsum" id="7S7F"/>
<dbReference type="PDBsum" id="7XCR"/>
<dbReference type="PDBsum" id="7XCT"/>
<dbReference type="EMDB" id="EMD-0458"/>
<dbReference type="EMDB" id="EMD-0468"/>
<dbReference type="EMDB" id="EMD-0480"/>
<dbReference type="EMDB" id="EMD-30232"/>
<dbReference type="EMDB" id="EMD-33126"/>
<dbReference type="EMDB" id="EMD-33127"/>
<dbReference type="EMDB" id="EMD-9384"/>
<dbReference type="EMDB" id="EMD-9783"/>
<dbReference type="EMDB" id="EMD-9843"/>
<dbReference type="EMDB" id="EMD-9844"/>
<dbReference type="SMR" id="Q8TEK3"/>
<dbReference type="BioGRID" id="124082">
    <property type="interactions" value="812"/>
</dbReference>
<dbReference type="CORUM" id="Q8TEK3"/>
<dbReference type="DIP" id="DIP-56410N"/>
<dbReference type="FunCoup" id="Q8TEK3">
    <property type="interactions" value="2286"/>
</dbReference>
<dbReference type="IntAct" id="Q8TEK3">
    <property type="interactions" value="39"/>
</dbReference>
<dbReference type="MINT" id="Q8TEK3"/>
<dbReference type="STRING" id="9606.ENSP00000381657"/>
<dbReference type="BindingDB" id="Q8TEK3"/>
<dbReference type="ChEMBL" id="CHEMBL1795117"/>
<dbReference type="DrugBank" id="DB12920">
    <property type="generic name" value="Pinometostat"/>
</dbReference>
<dbReference type="DrugCentral" id="Q8TEK3"/>
<dbReference type="GuidetoPHARMACOLOGY" id="2650"/>
<dbReference type="GlyGen" id="Q8TEK3">
    <property type="glycosylation" value="5 sites, 1 O-linked glycan (3 sites)"/>
</dbReference>
<dbReference type="iPTMnet" id="Q8TEK3"/>
<dbReference type="PhosphoSitePlus" id="Q8TEK3"/>
<dbReference type="BioMuta" id="DOT1L"/>
<dbReference type="DMDM" id="25090171"/>
<dbReference type="jPOST" id="Q8TEK3"/>
<dbReference type="MassIVE" id="Q8TEK3"/>
<dbReference type="PaxDb" id="9606-ENSP00000381657"/>
<dbReference type="PeptideAtlas" id="Q8TEK3"/>
<dbReference type="ProteomicsDB" id="74468">
    <molecule id="Q8TEK3-1"/>
</dbReference>
<dbReference type="ProteomicsDB" id="74469">
    <molecule id="Q8TEK3-2"/>
</dbReference>
<dbReference type="Pumba" id="Q8TEK3"/>
<dbReference type="ABCD" id="Q8TEK3">
    <property type="antibodies" value="1 sequenced antibody"/>
</dbReference>
<dbReference type="Antibodypedia" id="22937">
    <property type="antibodies" value="545 antibodies from 32 providers"/>
</dbReference>
<dbReference type="DNASU" id="84444"/>
<dbReference type="Ensembl" id="ENST00000398665.8">
    <molecule id="Q8TEK3-2"/>
    <property type="protein sequence ID" value="ENSP00000381657.3"/>
    <property type="gene ID" value="ENSG00000104885.19"/>
</dbReference>
<dbReference type="GeneID" id="84444"/>
<dbReference type="KEGG" id="hsa:84444"/>
<dbReference type="MANE-Select" id="ENST00000398665.8">
    <property type="protein sequence ID" value="ENSP00000381657.3"/>
    <property type="RefSeq nucleotide sequence ID" value="NM_032482.3"/>
    <property type="RefSeq protein sequence ID" value="NP_115871.1"/>
</dbReference>
<dbReference type="UCSC" id="uc002lvb.4">
    <molecule id="Q8TEK3-2"/>
    <property type="organism name" value="human"/>
</dbReference>
<dbReference type="AGR" id="HGNC:24948"/>
<dbReference type="CTD" id="84444"/>
<dbReference type="DisGeNET" id="84444"/>
<dbReference type="GeneCards" id="DOT1L"/>
<dbReference type="HGNC" id="HGNC:24948">
    <property type="gene designation" value="DOT1L"/>
</dbReference>
<dbReference type="HPA" id="ENSG00000104885">
    <property type="expression patterns" value="Tissue enhanced (testis)"/>
</dbReference>
<dbReference type="MalaCards" id="DOT1L"/>
<dbReference type="MIM" id="607375">
    <property type="type" value="gene"/>
</dbReference>
<dbReference type="neXtProt" id="NX_Q8TEK3"/>
<dbReference type="OpenTargets" id="ENSG00000104885"/>
<dbReference type="PharmGKB" id="PA134993717"/>
<dbReference type="VEuPathDB" id="HostDB:ENSG00000104885"/>
<dbReference type="eggNOG" id="KOG3924">
    <property type="taxonomic scope" value="Eukaryota"/>
</dbReference>
<dbReference type="GeneTree" id="ENSGT00390000013515"/>
<dbReference type="HOGENOM" id="CLU_004082_1_0_1"/>
<dbReference type="InParanoid" id="Q8TEK3"/>
<dbReference type="OMA" id="ARGDCGQ"/>
<dbReference type="OrthoDB" id="443402at2759"/>
<dbReference type="PAN-GO" id="Q8TEK3">
    <property type="GO annotations" value="5 GO annotations based on evolutionary models"/>
</dbReference>
<dbReference type="PhylomeDB" id="Q8TEK3"/>
<dbReference type="TreeFam" id="TF106393"/>
<dbReference type="BioCyc" id="MetaCyc:HS02643-MONOMER"/>
<dbReference type="BRENDA" id="2.1.1.355">
    <property type="organism ID" value="2681"/>
</dbReference>
<dbReference type="BRENDA" id="2.1.1.360">
    <property type="organism ID" value="2681"/>
</dbReference>
<dbReference type="PathwayCommons" id="Q8TEK3"/>
<dbReference type="Reactome" id="R-HSA-3214841">
    <property type="pathway name" value="PKMTs methylate histone lysines"/>
</dbReference>
<dbReference type="SignaLink" id="Q8TEK3"/>
<dbReference type="SIGNOR" id="Q8TEK3"/>
<dbReference type="BioGRID-ORCS" id="84444">
    <property type="hits" value="100 hits in 1183 CRISPR screens"/>
</dbReference>
<dbReference type="ChiTaRS" id="DOT1L">
    <property type="organism name" value="human"/>
</dbReference>
<dbReference type="EvolutionaryTrace" id="Q8TEK3"/>
<dbReference type="GeneWiki" id="DOT1L"/>
<dbReference type="GenomeRNAi" id="84444"/>
<dbReference type="Pharos" id="Q8TEK3">
    <property type="development level" value="Tchem"/>
</dbReference>
<dbReference type="PRO" id="PR:Q8TEK3"/>
<dbReference type="Proteomes" id="UP000005640">
    <property type="component" value="Chromosome 19"/>
</dbReference>
<dbReference type="RNAct" id="Q8TEK3">
    <property type="molecule type" value="protein"/>
</dbReference>
<dbReference type="Bgee" id="ENSG00000104885">
    <property type="expression patterns" value="Expressed in right testis and 124 other cell types or tissues"/>
</dbReference>
<dbReference type="ExpressionAtlas" id="Q8TEK3">
    <property type="expression patterns" value="baseline and differential"/>
</dbReference>
<dbReference type="GO" id="GO:0000781">
    <property type="term" value="C:chromosome, telomeric region"/>
    <property type="evidence" value="ECO:0007669"/>
    <property type="project" value="GOC"/>
</dbReference>
<dbReference type="GO" id="GO:0005737">
    <property type="term" value="C:cytoplasm"/>
    <property type="evidence" value="ECO:0007669"/>
    <property type="project" value="Ensembl"/>
</dbReference>
<dbReference type="GO" id="GO:0043231">
    <property type="term" value="C:intracellular membrane-bounded organelle"/>
    <property type="evidence" value="ECO:0000314"/>
    <property type="project" value="HPA"/>
</dbReference>
<dbReference type="GO" id="GO:0005654">
    <property type="term" value="C:nucleoplasm"/>
    <property type="evidence" value="ECO:0000314"/>
    <property type="project" value="HPA"/>
</dbReference>
<dbReference type="GO" id="GO:0005634">
    <property type="term" value="C:nucleus"/>
    <property type="evidence" value="ECO:0000314"/>
    <property type="project" value="MGI"/>
</dbReference>
<dbReference type="GO" id="GO:0032991">
    <property type="term" value="C:protein-containing complex"/>
    <property type="evidence" value="ECO:0000314"/>
    <property type="project" value="MGI"/>
</dbReference>
<dbReference type="GO" id="GO:0003677">
    <property type="term" value="F:DNA binding"/>
    <property type="evidence" value="ECO:0007669"/>
    <property type="project" value="UniProtKB-KW"/>
</dbReference>
<dbReference type="GO" id="GO:0140938">
    <property type="term" value="F:histone H3 methyltransferase activity"/>
    <property type="evidence" value="ECO:0000304"/>
    <property type="project" value="Reactome"/>
</dbReference>
<dbReference type="GO" id="GO:0031151">
    <property type="term" value="F:histone H3K79 methyltransferase activity"/>
    <property type="evidence" value="ECO:0000314"/>
    <property type="project" value="MGI"/>
</dbReference>
<dbReference type="GO" id="GO:0140956">
    <property type="term" value="F:histone H3K79 trimethyltransferase activity"/>
    <property type="evidence" value="ECO:0007669"/>
    <property type="project" value="UniProtKB-EC"/>
</dbReference>
<dbReference type="GO" id="GO:0042054">
    <property type="term" value="F:histone methyltransferase activity"/>
    <property type="evidence" value="ECO:0000314"/>
    <property type="project" value="UniProtKB"/>
</dbReference>
<dbReference type="GO" id="GO:0003676">
    <property type="term" value="F:nucleic acid binding"/>
    <property type="evidence" value="ECO:0000269"/>
    <property type="project" value="DisProt"/>
</dbReference>
<dbReference type="GO" id="GO:0061629">
    <property type="term" value="F:RNA polymerase II-specific DNA-binding transcription factor binding"/>
    <property type="evidence" value="ECO:0000353"/>
    <property type="project" value="UniProtKB"/>
</dbReference>
<dbReference type="GO" id="GO:0003713">
    <property type="term" value="F:transcription coactivator activity"/>
    <property type="evidence" value="ECO:0000315"/>
    <property type="project" value="UniProtKB"/>
</dbReference>
<dbReference type="GO" id="GO:0000077">
    <property type="term" value="P:DNA damage checkpoint signaling"/>
    <property type="evidence" value="ECO:0000318"/>
    <property type="project" value="GO_Central"/>
</dbReference>
<dbReference type="GO" id="GO:0006281">
    <property type="term" value="P:DNA repair"/>
    <property type="evidence" value="ECO:0000318"/>
    <property type="project" value="GO_Central"/>
</dbReference>
<dbReference type="GO" id="GO:0010467">
    <property type="term" value="P:gene expression"/>
    <property type="evidence" value="ECO:0007669"/>
    <property type="project" value="Ensembl"/>
</dbReference>
<dbReference type="GO" id="GO:0032259">
    <property type="term" value="P:methylation"/>
    <property type="evidence" value="ECO:0007669"/>
    <property type="project" value="UniProtKB-KW"/>
</dbReference>
<dbReference type="GO" id="GO:0045944">
    <property type="term" value="P:positive regulation of transcription by RNA polymerase II"/>
    <property type="evidence" value="ECO:0000314"/>
    <property type="project" value="MGI"/>
</dbReference>
<dbReference type="GO" id="GO:0046425">
    <property type="term" value="P:regulation of receptor signaling pathway via JAK-STAT"/>
    <property type="evidence" value="ECO:0000314"/>
    <property type="project" value="UniProtKB"/>
</dbReference>
<dbReference type="GO" id="GO:2000677">
    <property type="term" value="P:regulation of transcription regulatory region DNA binding"/>
    <property type="evidence" value="ECO:0000315"/>
    <property type="project" value="UniProtKB"/>
</dbReference>
<dbReference type="GO" id="GO:0031509">
    <property type="term" value="P:subtelomeric heterochromatin formation"/>
    <property type="evidence" value="ECO:0000318"/>
    <property type="project" value="GO_Central"/>
</dbReference>
<dbReference type="GO" id="GO:0032200">
    <property type="term" value="P:telomere organization"/>
    <property type="evidence" value="ECO:0000304"/>
    <property type="project" value="BHF-UCL"/>
</dbReference>
<dbReference type="CDD" id="cd02440">
    <property type="entry name" value="AdoMet_MTases"/>
    <property type="match status" value="1"/>
</dbReference>
<dbReference type="CDD" id="cd20902">
    <property type="entry name" value="CC_DOT1L"/>
    <property type="match status" value="1"/>
</dbReference>
<dbReference type="DisProt" id="DP01985"/>
<dbReference type="FunFam" id="1.10.260.60:FF:000001">
    <property type="entry name" value="Histone-lysine N-methyltransferase, H3 lysine-79 specific"/>
    <property type="match status" value="1"/>
</dbReference>
<dbReference type="FunFam" id="3.40.50.150:FF:000033">
    <property type="entry name" value="Histone-lysine N-methyltransferase, H3 lysine-79 specific"/>
    <property type="match status" value="1"/>
</dbReference>
<dbReference type="Gene3D" id="1.10.260.60">
    <property type="match status" value="1"/>
</dbReference>
<dbReference type="Gene3D" id="3.40.50.150">
    <property type="entry name" value="Vaccinia Virus protein VP39"/>
    <property type="match status" value="1"/>
</dbReference>
<dbReference type="InterPro" id="IPR025789">
    <property type="entry name" value="DOT1_dom"/>
</dbReference>
<dbReference type="InterPro" id="IPR021169">
    <property type="entry name" value="DOT1L/grappa"/>
</dbReference>
<dbReference type="InterPro" id="IPR030445">
    <property type="entry name" value="H3-K79_meTrfase"/>
</dbReference>
<dbReference type="InterPro" id="IPR029063">
    <property type="entry name" value="SAM-dependent_MTases_sf"/>
</dbReference>
<dbReference type="PANTHER" id="PTHR21451">
    <property type="entry name" value="HISTONE H3 METHYLTRANSFERASE"/>
    <property type="match status" value="1"/>
</dbReference>
<dbReference type="PANTHER" id="PTHR21451:SF0">
    <property type="entry name" value="HISTONE-LYSINE N-METHYLTRANSFERASE, H3 LYSINE-79 SPECIFIC"/>
    <property type="match status" value="1"/>
</dbReference>
<dbReference type="Pfam" id="PF08123">
    <property type="entry name" value="DOT1"/>
    <property type="match status" value="1"/>
</dbReference>
<dbReference type="PIRSF" id="PIRSF037123">
    <property type="entry name" value="Histone_H3-K79_MeTrfase_met"/>
    <property type="match status" value="1"/>
</dbReference>
<dbReference type="SUPFAM" id="SSF53335">
    <property type="entry name" value="S-adenosyl-L-methionine-dependent methyltransferases"/>
    <property type="match status" value="1"/>
</dbReference>
<dbReference type="PROSITE" id="PS51569">
    <property type="entry name" value="DOT1"/>
    <property type="match status" value="1"/>
</dbReference>
<keyword id="KW-0002">3D-structure</keyword>
<keyword id="KW-0025">Alternative splicing</keyword>
<keyword id="KW-0156">Chromatin regulator</keyword>
<keyword id="KW-0225">Disease variant</keyword>
<keyword id="KW-0238">DNA-binding</keyword>
<keyword id="KW-0489">Methyltransferase</keyword>
<keyword id="KW-0539">Nucleus</keyword>
<keyword id="KW-0597">Phosphoprotein</keyword>
<keyword id="KW-1267">Proteomics identification</keyword>
<keyword id="KW-1185">Reference proteome</keyword>
<keyword id="KW-0677">Repeat</keyword>
<keyword id="KW-0949">S-adenosyl-L-methionine</keyword>
<keyword id="KW-0808">Transferase</keyword>
<feature type="chain" id="PRO_0000186089" description="Histone-lysine N-methyltransferase, H3 lysine-79 specific">
    <location>
        <begin position="1"/>
        <end position="1537"/>
    </location>
</feature>
<feature type="domain" description="DOT1" evidence="1">
    <location>
        <begin position="16"/>
        <end position="330"/>
    </location>
</feature>
<feature type="region of interest" description="Disordered" evidence="2">
    <location>
        <begin position="334"/>
        <end position="467"/>
    </location>
</feature>
<feature type="region of interest" description="Required for interaction with nucleosomes and DNA" evidence="4">
    <location>
        <begin position="391"/>
        <end position="416"/>
    </location>
</feature>
<feature type="region of interest" description="Disordered" evidence="2">
    <location>
        <begin position="785"/>
        <end position="853"/>
    </location>
</feature>
<feature type="region of interest" description="Disordered" evidence="2">
    <location>
        <begin position="893"/>
        <end position="912"/>
    </location>
</feature>
<feature type="region of interest" description="Disordered" evidence="2">
    <location>
        <begin position="957"/>
        <end position="1128"/>
    </location>
</feature>
<feature type="region of interest" description="Disordered" evidence="2">
    <location>
        <begin position="1145"/>
        <end position="1243"/>
    </location>
</feature>
<feature type="region of interest" description="Disordered" evidence="2">
    <location>
        <begin position="1334"/>
        <end position="1410"/>
    </location>
</feature>
<feature type="compositionally biased region" description="Basic and acidic residues" evidence="2">
    <location>
        <begin position="334"/>
        <end position="350"/>
    </location>
</feature>
<feature type="compositionally biased region" description="Basic residues" evidence="2">
    <location>
        <begin position="393"/>
        <end position="416"/>
    </location>
</feature>
<feature type="compositionally biased region" description="Polar residues" evidence="2">
    <location>
        <begin position="439"/>
        <end position="450"/>
    </location>
</feature>
<feature type="compositionally biased region" description="Basic and acidic residues" evidence="2">
    <location>
        <begin position="800"/>
        <end position="809"/>
    </location>
</feature>
<feature type="compositionally biased region" description="Basic and acidic residues" evidence="2">
    <location>
        <begin position="844"/>
        <end position="853"/>
    </location>
</feature>
<feature type="compositionally biased region" description="Polar residues" evidence="2">
    <location>
        <begin position="899"/>
        <end position="912"/>
    </location>
</feature>
<feature type="compositionally biased region" description="Polar residues" evidence="2">
    <location>
        <begin position="966"/>
        <end position="986"/>
    </location>
</feature>
<feature type="compositionally biased region" description="Polar residues" evidence="2">
    <location>
        <begin position="994"/>
        <end position="1010"/>
    </location>
</feature>
<feature type="compositionally biased region" description="Polar residues" evidence="2">
    <location>
        <begin position="1048"/>
        <end position="1068"/>
    </location>
</feature>
<feature type="compositionally biased region" description="Polar residues" evidence="2">
    <location>
        <begin position="1118"/>
        <end position="1128"/>
    </location>
</feature>
<feature type="compositionally biased region" description="Basic and acidic residues" evidence="2">
    <location>
        <begin position="1158"/>
        <end position="1171"/>
    </location>
</feature>
<feature type="compositionally biased region" description="Polar residues" evidence="2">
    <location>
        <begin position="1172"/>
        <end position="1184"/>
    </location>
</feature>
<feature type="compositionally biased region" description="Acidic residues" evidence="2">
    <location>
        <begin position="1185"/>
        <end position="1195"/>
    </location>
</feature>
<feature type="binding site">
    <location>
        <begin position="136"/>
        <end position="139"/>
    </location>
    <ligand>
        <name>S-adenosyl-L-methionine</name>
        <dbReference type="ChEBI" id="CHEBI:59789"/>
    </ligand>
</feature>
<feature type="binding site">
    <location>
        <begin position="159"/>
        <end position="168"/>
    </location>
    <ligand>
        <name>S-adenosyl-L-methionine</name>
        <dbReference type="ChEBI" id="CHEBI:59789"/>
    </ligand>
</feature>
<feature type="binding site">
    <location>
        <position position="186"/>
    </location>
    <ligand>
        <name>S-adenosyl-L-methionine</name>
        <dbReference type="ChEBI" id="CHEBI:59789"/>
    </ligand>
</feature>
<feature type="binding site">
    <location>
        <begin position="222"/>
        <end position="223"/>
    </location>
    <ligand>
        <name>S-adenosyl-L-methionine</name>
        <dbReference type="ChEBI" id="CHEBI:59789"/>
    </ligand>
</feature>
<feature type="modified residue" description="Phosphoserine" evidence="15">
    <location>
        <position position="297"/>
    </location>
</feature>
<feature type="modified residue" description="Phosphoserine" evidence="11 12 13 14 15">
    <location>
        <position position="374"/>
    </location>
</feature>
<feature type="modified residue" description="Phosphoserine" evidence="15">
    <location>
        <position position="448"/>
    </location>
</feature>
<feature type="modified residue" description="Phosphoserine" evidence="13">
    <location>
        <position position="471"/>
    </location>
</feature>
<feature type="modified residue" description="Phosphothreonine" evidence="13">
    <location>
        <position position="480"/>
    </location>
</feature>
<feature type="modified residue" description="Phosphoserine" evidence="11 13 15">
    <location>
        <position position="775"/>
    </location>
</feature>
<feature type="modified residue" description="Phosphoserine" evidence="15">
    <location>
        <position position="786"/>
    </location>
</feature>
<feature type="modified residue" description="Phosphoserine" evidence="15">
    <location>
        <position position="826"/>
    </location>
</feature>
<feature type="modified residue" description="Phosphoserine; by MAPK11" evidence="7 13 15">
    <location>
        <position position="834"/>
    </location>
</feature>
<feature type="modified residue" description="Phosphothreonine; by MAPK11" evidence="7 12 15">
    <location>
        <position position="900"/>
    </location>
</feature>
<feature type="modified residue" description="Phosphoserine; by MAPK11" evidence="7 12 13 14 15">
    <location>
        <position position="902"/>
    </location>
</feature>
<feature type="modified residue" description="Phosphothreonine; by MAPK11" evidence="7 15">
    <location>
        <position position="984"/>
    </location>
</feature>
<feature type="modified residue" description="Phosphoserine" evidence="15">
    <location>
        <position position="997"/>
    </location>
</feature>
<feature type="modified residue" description="Phosphoserine; by MAPK11" evidence="7 10 11 12 13 15">
    <location>
        <position position="1001"/>
    </location>
</feature>
<feature type="modified residue" description="Phosphoserine; by MAPK11" evidence="7 11 15">
    <location>
        <position position="1009"/>
    </location>
</feature>
<feature type="modified residue" description="Phosphoserine" evidence="13 15">
    <location>
        <position position="1035"/>
    </location>
</feature>
<feature type="modified residue" description="Phosphoserine" evidence="15">
    <location>
        <position position="1093"/>
    </location>
</feature>
<feature type="modified residue" description="Phosphoserine; by MAPK11" evidence="7 15">
    <location>
        <position position="1104"/>
    </location>
</feature>
<feature type="modified residue" description="Phosphoserine" evidence="13 15">
    <location>
        <position position="1213"/>
    </location>
</feature>
<feature type="modified residue" description="Phosphoserine" evidence="15">
    <location>
        <position position="1246"/>
    </location>
</feature>
<feature type="splice variant" id="VSP_059795" description="In isoform 2.">
    <original>N</original>
    <variation>VVFNHAVPSASAHPFGARVGRGAACGSATLGPSPLQAAASASASSFQAPASVETRPPPPPPPPPPPLPPPAHLGRSPAGPPVLHAPPPPNAALPPPPTLLASNPEPALLQSLASLPPNQAFLPPTSAASLPPANASLSIKLTSLPHKGARPSFTVHHQPLPRLALAQAAPGIPQASATGPSAVWVSLGMPPPYAAHLSGVKPR</variation>
    <location>
        <position position="1537"/>
    </location>
</feature>
<feature type="sequence variant" id="VAR_088679" description="Found in a patient with developmental delay and intellectual disability; uncertain significance." evidence="6">
    <original>C</original>
    <variation>G</variation>
    <location>
        <position position="45"/>
    </location>
</feature>
<feature type="sequence variant" id="VAR_088680" description="Found in a patient with developmental delay and intellectual disability; likely pathogenic; dbSNP:rs781606489." evidence="6">
    <original>T</original>
    <variation>M</variation>
    <location>
        <position position="100"/>
    </location>
</feature>
<feature type="sequence variant" id="VAR_088681" description="Found in patients with developmental delay and intellectual disability; likely pathogenic; causes an almost 4-fold increase in H3K79 methylation in vitro; dbSNP:rs2022775856." evidence="6">
    <original>E</original>
    <variation>K</variation>
    <location>
        <position position="123"/>
    </location>
</feature>
<feature type="sequence variant" id="VAR_088682" description="Found in a patient with developmental delay and intellectual disability; likely pathogenic; dbSNP:rs2144742354." evidence="6">
    <original>E</original>
    <variation>K</variation>
    <location>
        <position position="129"/>
    </location>
</feature>
<feature type="sequence variant" id="VAR_088683" description="In dbSNP:rs2144814855." evidence="6">
    <original>R</original>
    <variation>C</variation>
    <location>
        <position position="292"/>
    </location>
</feature>
<feature type="sequence variant" id="VAR_088684" description="In dbSNP:rs377185393." evidence="6">
    <original>D</original>
    <variation>G</variation>
    <location>
        <position position="451"/>
    </location>
</feature>
<feature type="sequence variant" id="VAR_088685" description="Found in a patient with developmental delay and intellectual disability; likely pathogenic." evidence="6">
    <original>L</original>
    <variation>V</variation>
    <location>
        <position position="626"/>
    </location>
</feature>
<feature type="sequence variant" id="VAR_014287" description="In dbSNP:rs880525.">
    <original>L</original>
    <variation>M</variation>
    <location>
        <position position="726"/>
    </location>
</feature>
<feature type="sequence variant" id="VAR_088686" description="Found in a patient with developmental delay and intellectual disability; likely pathogenic; slightly increases H3K79 methylation in vitro; dbSNP:rs1599605821." evidence="6">
    <original>R</original>
    <variation>C</variation>
    <location>
        <position position="853"/>
    </location>
</feature>
<feature type="sequence variant" id="VAR_088687" description="Found in a patient with developmental delay and intellectual disability; uncertain significance; dbSNP:rs753193665." evidence="6">
    <original>K</original>
    <variation>M</variation>
    <location>
        <position position="1025"/>
    </location>
</feature>
<feature type="sequence variant" id="VAR_014288" description="In dbSNP:rs3815308.">
    <original>G</original>
    <variation>S</variation>
    <location>
        <position position="1386"/>
    </location>
</feature>
<feature type="sequence variant" id="VAR_014289" description="In dbSNP:rs2302061.">
    <original>V</original>
    <variation>L</variation>
    <location>
        <position position="1418"/>
    </location>
</feature>
<feature type="mutagenesis site" description="Abolishes methyltransferase activity." evidence="3">
    <original>GSG</original>
    <variation>RCR</variation>
    <location>
        <begin position="163"/>
        <end position="165"/>
    </location>
</feature>
<feature type="mutagenesis site" description="Loss of activity." evidence="4">
    <original>N</original>
    <variation>A</variation>
    <variation>D</variation>
    <location>
        <position position="241"/>
    </location>
</feature>
<feature type="mutagenesis site" description="Loss of activity." evidence="4">
    <original>Y</original>
    <variation>A</variation>
    <location>
        <position position="312"/>
    </location>
</feature>
<feature type="mutagenesis site" description="No effect." evidence="4">
    <original>Y</original>
    <variation>F</variation>
    <location>
        <position position="312"/>
    </location>
</feature>
<feature type="sequence conflict" description="In Ref. 4; BAB84946." evidence="8" ref="4">
    <original>G</original>
    <variation>E</variation>
    <location>
        <position position="210"/>
    </location>
</feature>
<feature type="sequence conflict" description="In Ref. 3." evidence="8" ref="3">
    <original>RSPHSPFYQLPPSV</original>
    <variation>TLRTPSGSPRRTKL</variation>
    <location>
        <begin position="454"/>
        <end position="467"/>
    </location>
</feature>
<feature type="sequence conflict" description="In Ref. 4; BAB84946." evidence="8" ref="4">
    <original>P</original>
    <variation>L</variation>
    <location>
        <position position="464"/>
    </location>
</feature>
<feature type="strand" evidence="24">
    <location>
        <begin position="6"/>
        <end position="9"/>
    </location>
</feature>
<feature type="strand" evidence="26">
    <location>
        <begin position="12"/>
        <end position="16"/>
    </location>
</feature>
<feature type="strand" evidence="24">
    <location>
        <begin position="18"/>
        <end position="23"/>
    </location>
</feature>
<feature type="strand" evidence="24">
    <location>
        <begin position="26"/>
        <end position="28"/>
    </location>
</feature>
<feature type="helix" evidence="24">
    <location>
        <begin position="33"/>
        <end position="47"/>
    </location>
</feature>
<feature type="helix" evidence="24">
    <location>
        <begin position="49"/>
        <end position="54"/>
    </location>
</feature>
<feature type="helix" evidence="24">
    <location>
        <begin position="57"/>
        <end position="60"/>
    </location>
</feature>
<feature type="helix" evidence="24">
    <location>
        <begin position="68"/>
        <end position="90"/>
    </location>
</feature>
<feature type="strand" evidence="18">
    <location>
        <begin position="91"/>
        <end position="93"/>
    </location>
</feature>
<feature type="strand" evidence="20">
    <location>
        <begin position="98"/>
        <end position="100"/>
    </location>
</feature>
<feature type="helix" evidence="24">
    <location>
        <begin position="104"/>
        <end position="118"/>
    </location>
</feature>
<feature type="helix" evidence="24">
    <location>
        <begin position="122"/>
        <end position="125"/>
    </location>
</feature>
<feature type="helix" evidence="19">
    <location>
        <begin position="126"/>
        <end position="128"/>
    </location>
</feature>
<feature type="strand" evidence="24">
    <location>
        <begin position="129"/>
        <end position="131"/>
    </location>
</feature>
<feature type="helix" evidence="24">
    <location>
        <begin position="133"/>
        <end position="135"/>
    </location>
</feature>
<feature type="turn" evidence="24">
    <location>
        <begin position="136"/>
        <end position="139"/>
    </location>
</feature>
<feature type="helix" evidence="24">
    <location>
        <begin position="140"/>
        <end position="151"/>
    </location>
</feature>
<feature type="strand" evidence="23">
    <location>
        <begin position="155"/>
        <end position="157"/>
    </location>
</feature>
<feature type="strand" evidence="24">
    <location>
        <begin position="158"/>
        <end position="163"/>
    </location>
</feature>
<feature type="helix" evidence="24">
    <location>
        <begin position="168"/>
        <end position="176"/>
    </location>
</feature>
<feature type="strand" evidence="24">
    <location>
        <begin position="180"/>
        <end position="186"/>
    </location>
</feature>
<feature type="helix" evidence="24">
    <location>
        <begin position="189"/>
        <end position="209"/>
    </location>
</feature>
<feature type="strand" evidence="24">
    <location>
        <begin position="216"/>
        <end position="220"/>
    </location>
</feature>
<feature type="helix" evidence="24">
    <location>
        <begin position="226"/>
        <end position="233"/>
    </location>
</feature>
<feature type="strand" evidence="24">
    <location>
        <begin position="236"/>
        <end position="240"/>
    </location>
</feature>
<feature type="turn" evidence="17">
    <location>
        <begin position="243"/>
        <end position="245"/>
    </location>
</feature>
<feature type="helix" evidence="24">
    <location>
        <begin position="247"/>
        <end position="257"/>
    </location>
</feature>
<feature type="strand" evidence="24">
    <location>
        <begin position="265"/>
        <end position="270"/>
    </location>
</feature>
<feature type="strand" evidence="18">
    <location>
        <begin position="281"/>
        <end position="283"/>
    </location>
</feature>
<feature type="helix" evidence="24">
    <location>
        <begin position="287"/>
        <end position="289"/>
    </location>
</feature>
<feature type="strand" evidence="24">
    <location>
        <begin position="290"/>
        <end position="296"/>
    </location>
</feature>
<feature type="turn" evidence="21">
    <location>
        <begin position="298"/>
        <end position="300"/>
    </location>
</feature>
<feature type="strand" evidence="22">
    <location>
        <begin position="301"/>
        <end position="303"/>
    </location>
</feature>
<feature type="strand" evidence="20">
    <location>
        <begin position="307"/>
        <end position="309"/>
    </location>
</feature>
<feature type="strand" evidence="24">
    <location>
        <begin position="312"/>
        <end position="317"/>
    </location>
</feature>
<feature type="helix" evidence="24">
    <location>
        <begin position="320"/>
        <end position="330"/>
    </location>
</feature>
<feature type="helix" evidence="18">
    <location>
        <begin position="332"/>
        <end position="342"/>
    </location>
</feature>
<feature type="helix" evidence="25">
    <location>
        <begin position="611"/>
        <end position="648"/>
    </location>
</feature>
<feature type="strand" evidence="16">
    <location>
        <begin position="880"/>
        <end position="882"/>
    </location>
</feature>
<feature type="turn" evidence="16">
    <location>
        <begin position="885"/>
        <end position="887"/>
    </location>
</feature>
<organism>
    <name type="scientific">Homo sapiens</name>
    <name type="common">Human</name>
    <dbReference type="NCBI Taxonomy" id="9606"/>
    <lineage>
        <taxon>Eukaryota</taxon>
        <taxon>Metazoa</taxon>
        <taxon>Chordata</taxon>
        <taxon>Craniata</taxon>
        <taxon>Vertebrata</taxon>
        <taxon>Euteleostomi</taxon>
        <taxon>Mammalia</taxon>
        <taxon>Eutheria</taxon>
        <taxon>Euarchontoglires</taxon>
        <taxon>Primates</taxon>
        <taxon>Haplorrhini</taxon>
        <taxon>Catarrhini</taxon>
        <taxon>Hominidae</taxon>
        <taxon>Homo</taxon>
    </lineage>
</organism>
<reference key="1">
    <citation type="journal article" date="2002" name="Curr. Biol.">
        <title>Methylation of H3-lysine 79 is mediated by a new family of HMTases without a SET domain.</title>
        <authorList>
            <person name="Feng Q."/>
            <person name="Wang H."/>
            <person name="Ng H.H."/>
            <person name="Erdjument-Bromage H."/>
            <person name="Tempst P."/>
            <person name="Struhl K."/>
            <person name="Zhang Y."/>
        </authorList>
    </citation>
    <scope>NUCLEOTIDE SEQUENCE [MRNA] (ISOFORM 1)</scope>
    <scope>CATALYTIC ACTIVITY</scope>
    <scope>MUTAGENESIS OF 163-GLY--GLY-165</scope>
    <scope>FUNCTION</scope>
</reference>
<reference key="2">
    <citation type="journal article" date="2004" name="Nature">
        <title>The DNA sequence and biology of human chromosome 19.</title>
        <authorList>
            <person name="Grimwood J."/>
            <person name="Gordon L.A."/>
            <person name="Olsen A.S."/>
            <person name="Terry A."/>
            <person name="Schmutz J."/>
            <person name="Lamerdin J.E."/>
            <person name="Hellsten U."/>
            <person name="Goodstein D."/>
            <person name="Couronne O."/>
            <person name="Tran-Gyamfi M."/>
            <person name="Aerts A."/>
            <person name="Altherr M."/>
            <person name="Ashworth L."/>
            <person name="Bajorek E."/>
            <person name="Black S."/>
            <person name="Branscomb E."/>
            <person name="Caenepeel S."/>
            <person name="Carrano A.V."/>
            <person name="Caoile C."/>
            <person name="Chan Y.M."/>
            <person name="Christensen M."/>
            <person name="Cleland C.A."/>
            <person name="Copeland A."/>
            <person name="Dalin E."/>
            <person name="Dehal P."/>
            <person name="Denys M."/>
            <person name="Detter J.C."/>
            <person name="Escobar J."/>
            <person name="Flowers D."/>
            <person name="Fotopulos D."/>
            <person name="Garcia C."/>
            <person name="Georgescu A.M."/>
            <person name="Glavina T."/>
            <person name="Gomez M."/>
            <person name="Gonzales E."/>
            <person name="Groza M."/>
            <person name="Hammon N."/>
            <person name="Hawkins T."/>
            <person name="Haydu L."/>
            <person name="Ho I."/>
            <person name="Huang W."/>
            <person name="Israni S."/>
            <person name="Jett J."/>
            <person name="Kadner K."/>
            <person name="Kimball H."/>
            <person name="Kobayashi A."/>
            <person name="Larionov V."/>
            <person name="Leem S.-H."/>
            <person name="Lopez F."/>
            <person name="Lou Y."/>
            <person name="Lowry S."/>
            <person name="Malfatti S."/>
            <person name="Martinez D."/>
            <person name="McCready P.M."/>
            <person name="Medina C."/>
            <person name="Morgan J."/>
            <person name="Nelson K."/>
            <person name="Nolan M."/>
            <person name="Ovcharenko I."/>
            <person name="Pitluck S."/>
            <person name="Pollard M."/>
            <person name="Popkie A.P."/>
            <person name="Predki P."/>
            <person name="Quan G."/>
            <person name="Ramirez L."/>
            <person name="Rash S."/>
            <person name="Retterer J."/>
            <person name="Rodriguez A."/>
            <person name="Rogers S."/>
            <person name="Salamov A."/>
            <person name="Salazar A."/>
            <person name="She X."/>
            <person name="Smith D."/>
            <person name="Slezak T."/>
            <person name="Solovyev V."/>
            <person name="Thayer N."/>
            <person name="Tice H."/>
            <person name="Tsai M."/>
            <person name="Ustaszewska A."/>
            <person name="Vo N."/>
            <person name="Wagner M."/>
            <person name="Wheeler J."/>
            <person name="Wu K."/>
            <person name="Xie G."/>
            <person name="Yang J."/>
            <person name="Dubchak I."/>
            <person name="Furey T.S."/>
            <person name="DeJong P."/>
            <person name="Dickson M."/>
            <person name="Gordon D."/>
            <person name="Eichler E.E."/>
            <person name="Pennacchio L.A."/>
            <person name="Richardson P."/>
            <person name="Stubbs L."/>
            <person name="Rokhsar D.S."/>
            <person name="Myers R.M."/>
            <person name="Rubin E.M."/>
            <person name="Lucas S.M."/>
        </authorList>
    </citation>
    <scope>NUCLEOTIDE SEQUENCE [LARGE SCALE GENOMIC DNA]</scope>
</reference>
<reference key="3">
    <citation type="journal article" date="2001" name="DNA Res.">
        <title>Prediction of the coding sequences of unidentified human genes. XX. The complete sequences of 100 new cDNA clones from brain which code for large proteins in vitro.</title>
        <authorList>
            <person name="Nagase T."/>
            <person name="Nakayama M."/>
            <person name="Nakajima D."/>
            <person name="Kikuno R."/>
            <person name="Ohara O."/>
        </authorList>
    </citation>
    <scope>NUCLEOTIDE SEQUENCE [LARGE SCALE MRNA] OF 454-1537 (ISOFORM 2)</scope>
    <source>
        <tissue>Brain</tissue>
    </source>
</reference>
<reference key="4">
    <citation type="journal article" date="2003" name="DNA Res.">
        <title>Characterization of long cDNA clones from human adult spleen. II. The complete sequences of 81 cDNA clones.</title>
        <authorList>
            <person name="Jikuya H."/>
            <person name="Takano J."/>
            <person name="Kikuno R."/>
            <person name="Hirosawa M."/>
            <person name="Nagase T."/>
            <person name="Nomura N."/>
            <person name="Ohara O."/>
        </authorList>
    </citation>
    <scope>PARTIAL NUCLEOTIDE SEQUENCE [LARGE SCALE MRNA] (ISOFORM 1)</scope>
    <source>
        <tissue>Spleen</tissue>
    </source>
</reference>
<reference key="5">
    <citation type="journal article" date="2005" name="Cell">
        <title>hDOT1L links histone methylation to leukemogenesis.</title>
        <authorList>
            <person name="Okada Y."/>
            <person name="Feng Q."/>
            <person name="Lin Y."/>
            <person name="Jiang Q."/>
            <person name="Li Y."/>
            <person name="Coffield V.M."/>
            <person name="Su L."/>
            <person name="Xu G."/>
            <person name="Zhang Y."/>
        </authorList>
    </citation>
    <scope>INTERACTION WITH MLLT10</scope>
    <scope>SUBCELLULAR LOCATION</scope>
</reference>
<reference key="6">
    <citation type="journal article" date="2008" name="J. Proteome Res.">
        <title>Combining protein-based IMAC, peptide-based IMAC, and MudPIT for efficient phosphoproteomic analysis.</title>
        <authorList>
            <person name="Cantin G.T."/>
            <person name="Yi W."/>
            <person name="Lu B."/>
            <person name="Park S.K."/>
            <person name="Xu T."/>
            <person name="Lee J.-D."/>
            <person name="Yates J.R. III"/>
        </authorList>
    </citation>
    <scope>PHOSPHORYLATION [LARGE SCALE ANALYSIS] AT SER-1001</scope>
    <scope>IDENTIFICATION BY MASS SPECTROMETRY [LARGE SCALE ANALYSIS]</scope>
    <source>
        <tissue>Cervix carcinoma</tissue>
    </source>
</reference>
<reference key="7">
    <citation type="journal article" date="2008" name="Proc. Natl. Acad. Sci. U.S.A.">
        <title>A quantitative atlas of mitotic phosphorylation.</title>
        <authorList>
            <person name="Dephoure N."/>
            <person name="Zhou C."/>
            <person name="Villen J."/>
            <person name="Beausoleil S.A."/>
            <person name="Bakalarski C.E."/>
            <person name="Elledge S.J."/>
            <person name="Gygi S.P."/>
        </authorList>
    </citation>
    <scope>PHOSPHORYLATION [LARGE SCALE ANALYSIS] AT SER-374; SER-775; SER-1001 AND SER-1009</scope>
    <scope>IDENTIFICATION BY MASS SPECTROMETRY [LARGE SCALE ANALYSIS]</scope>
    <source>
        <tissue>Cervix carcinoma</tissue>
    </source>
</reference>
<reference key="8">
    <citation type="journal article" date="2009" name="Anal. Chem.">
        <title>Lys-N and trypsin cover complementary parts of the phosphoproteome in a refined SCX-based approach.</title>
        <authorList>
            <person name="Gauci S."/>
            <person name="Helbig A.O."/>
            <person name="Slijper M."/>
            <person name="Krijgsveld J."/>
            <person name="Heck A.J."/>
            <person name="Mohammed S."/>
        </authorList>
    </citation>
    <scope>IDENTIFICATION BY MASS SPECTROMETRY [LARGE SCALE ANALYSIS]</scope>
</reference>
<reference key="9">
    <citation type="journal article" date="2009" name="Sci. Signal.">
        <title>Quantitative phosphoproteomic analysis of T cell receptor signaling reveals system-wide modulation of protein-protein interactions.</title>
        <authorList>
            <person name="Mayya V."/>
            <person name="Lundgren D.H."/>
            <person name="Hwang S.-I."/>
            <person name="Rezaul K."/>
            <person name="Wu L."/>
            <person name="Eng J.K."/>
            <person name="Rodionov V."/>
            <person name="Han D.K."/>
        </authorList>
    </citation>
    <scope>PHOSPHORYLATION [LARGE SCALE ANALYSIS] AT SER-374; THR-900; SER-902 AND SER-1001</scope>
    <scope>IDENTIFICATION BY MASS SPECTROMETRY [LARGE SCALE ANALYSIS]</scope>
    <source>
        <tissue>Leukemic T-cell</tissue>
    </source>
</reference>
<reference key="10">
    <citation type="journal article" date="2010" name="Sci. Signal.">
        <title>Quantitative phosphoproteomics reveals widespread full phosphorylation site occupancy during mitosis.</title>
        <authorList>
            <person name="Olsen J.V."/>
            <person name="Vermeulen M."/>
            <person name="Santamaria A."/>
            <person name="Kumar C."/>
            <person name="Miller M.L."/>
            <person name="Jensen L.J."/>
            <person name="Gnad F."/>
            <person name="Cox J."/>
            <person name="Jensen T.S."/>
            <person name="Nigg E.A."/>
            <person name="Brunak S."/>
            <person name="Mann M."/>
        </authorList>
    </citation>
    <scope>PHOSPHORYLATION [LARGE SCALE ANALYSIS] AT SER-374; SER-471; THR-480; SER-775; SER-834; SER-902; SER-1001; SER-1035 AND SER-1213</scope>
    <scope>IDENTIFICATION BY MASS SPECTROMETRY [LARGE SCALE ANALYSIS]</scope>
    <source>
        <tissue>Cervix carcinoma</tissue>
    </source>
</reference>
<reference key="11">
    <citation type="journal article" date="2011" name="Sci. Signal.">
        <title>System-wide temporal characterization of the proteome and phosphoproteome of human embryonic stem cell differentiation.</title>
        <authorList>
            <person name="Rigbolt K.T."/>
            <person name="Prokhorova T.A."/>
            <person name="Akimov V."/>
            <person name="Henningsen J."/>
            <person name="Johansen P.T."/>
            <person name="Kratchmarova I."/>
            <person name="Kassem M."/>
            <person name="Mann M."/>
            <person name="Olsen J.V."/>
            <person name="Blagoev B."/>
        </authorList>
    </citation>
    <scope>PHOSPHORYLATION [LARGE SCALE ANALYSIS] AT SER-374 AND SER-902</scope>
    <scope>IDENTIFICATION BY MASS SPECTROMETRY [LARGE SCALE ANALYSIS]</scope>
</reference>
<reference key="12">
    <citation type="journal article" date="2013" name="J. Proteome Res.">
        <title>Toward a comprehensive characterization of a human cancer cell phosphoproteome.</title>
        <authorList>
            <person name="Zhou H."/>
            <person name="Di Palma S."/>
            <person name="Preisinger C."/>
            <person name="Peng M."/>
            <person name="Polat A.N."/>
            <person name="Heck A.J."/>
            <person name="Mohammed S."/>
        </authorList>
    </citation>
    <scope>PHOSPHORYLATION [LARGE SCALE ANALYSIS] AT SER-297; SER-374; SER-448; SER-775; SER-786; SER-826; SER-834; THR-900; SER-902; THR-984; SER-997; SER-1001; SER-1009; SER-1035; SER-1093; SER-1104; SER-1213 AND SER-1246</scope>
    <scope>IDENTIFICATION BY MASS SPECTROMETRY [LARGE SCALE ANALYSIS]</scope>
    <source>
        <tissue>Cervix carcinoma</tissue>
        <tissue>Erythroleukemia</tissue>
    </source>
</reference>
<reference key="13">
    <citation type="journal article" date="2024" name="FEBS J.">
        <title>Proline-directed yeast and human MAP kinases phosphorylate the Dot1p/DOT1L histone H3K79 methyltransferase.</title>
        <authorList>
            <person name="Separovich R.J."/>
            <person name="Karakatsanis N.M."/>
            <person name="Gao K."/>
            <person name="Fuh D."/>
            <person name="Hamey J.J."/>
            <person name="Wilkins M.R."/>
        </authorList>
    </citation>
    <scope>PHOSPHORYLATION AT SER-834; THR-900; SER-902; THR-984; SER-1001; SER-1009 AND SER-1104</scope>
</reference>
<reference key="14">
    <citation type="journal article" date="2003" name="Cell">
        <title>Structure of the catalytic domain of human DOT1L, a non-SET domain nucleosomal histone methyltransferase.</title>
        <authorList>
            <person name="Min J."/>
            <person name="Feng Q."/>
            <person name="Li Z."/>
            <person name="Zhang Y."/>
            <person name="Xu R.-M."/>
        </authorList>
    </citation>
    <scope>X-RAY CRYSTALLOGRAPHY (2.5 ANGSTROMS) OF 1-416 IN COMPLEX WITH S-ADENOSINE-L-METHIONINE</scope>
    <scope>IDENTIFICATION BY MASS SPECTROMETRY</scope>
    <scope>MUTAGENESIS OF ASN-241 AND TYR-312</scope>
    <scope>NUCLEOSOME BINDING</scope>
    <scope>INTERACTION WITH DNA</scope>
</reference>
<reference key="15">
    <citation type="journal article" date="2023" name="Am. J. Hum. Genet.">
        <title>Rare de novo gain-of-function missense variants in DOT1L are associated with developmental delay and congenital anomalies.</title>
        <authorList>
            <consortium name="Undiagnosed Disease Network"/>
            <person name="Nil Z."/>
            <person name="Deshwar A.R."/>
            <person name="Huang Y."/>
            <person name="Barish S."/>
            <person name="Zhang X."/>
            <person name="Choufani S."/>
            <person name="Le Quesne Stabej P."/>
            <person name="Hayes I."/>
            <person name="Yap P."/>
            <person name="Haldeman-Englert C."/>
            <person name="Wilson C."/>
            <person name="Prescott T."/>
            <person name="Tveten K."/>
            <person name="Voello A."/>
            <person name="Haynes D."/>
            <person name="Wheeler P.G."/>
            <person name="Zon J."/>
            <person name="Cytrynbaum C."/>
            <person name="Jobling R."/>
            <person name="Blyth M."/>
            <person name="Banka S."/>
            <person name="Afenjar A."/>
            <person name="Mignot C."/>
            <person name="Robin-Renaldo F."/>
            <person name="Keren B."/>
            <person name="Kanca O."/>
            <person name="Mao X."/>
            <person name="Wegner D.J."/>
            <person name="Sisco K."/>
            <person name="Shinawi M."/>
            <person name="Wangler M.F."/>
            <person name="Weksberg R."/>
            <person name="Yamamoto S."/>
            <person name="Costain G."/>
            <person name="Bellen H.J."/>
        </authorList>
    </citation>
    <scope>INVOLVEMENT IN DEVELOPMENTAL DELAY AND INTELLECTUAL DISABILITY</scope>
    <scope>VARIANTS GLY-45; MET-100; LYS-123; LYS-129; CYS-292; GLY-451; VAL-626; CYS-853 AND MET-1025</scope>
</reference>